<sequence>MSLFEGAGVALITPFTEDNQINYEKLEELIEFQIANKTDAIIAAGTTAESATLTPEERMQVIKFCIERTKKRTIVIAGTGTNNTASAVEFSKKSYEYGADMVMAVTPYYNKGNESGLIDYYTQIANSVKCPVIMYSVPSRTGVKLSLNVIKTLSEISNIQGIKEASGDISYVADIVNVAPKLDLYSGNDDMVTPMMALGAKGVISVTSNIIPKENHDMVMNFLNGNVNEAIKTQIKYIDFVRAMFIETNPAPIKEAMNIMGFNVGECRSPLGPLSEKNREHVKNIINKYGLKK</sequence>
<protein>
    <recommendedName>
        <fullName evidence="1">4-hydroxy-tetrahydrodipicolinate synthase</fullName>
        <shortName evidence="1">HTPA synthase</shortName>
        <ecNumber evidence="1">4.3.3.7</ecNumber>
    </recommendedName>
</protein>
<reference key="1">
    <citation type="journal article" date="2009" name="PLoS ONE">
        <title>Genome sequence of the pathogenic intestinal spirochete Brachyspira hyodysenteriae reveals adaptations to its lifestyle in the porcine large intestine.</title>
        <authorList>
            <person name="Bellgard M.I."/>
            <person name="Wanchanthuek P."/>
            <person name="La T."/>
            <person name="Ryan K."/>
            <person name="Moolhuijzen P."/>
            <person name="Albertyn Z."/>
            <person name="Shaban B."/>
            <person name="Motro Y."/>
            <person name="Dunn D.S."/>
            <person name="Schibeci D."/>
            <person name="Hunter A."/>
            <person name="Barrero R."/>
            <person name="Phillips N.D."/>
            <person name="Hampson D.J."/>
        </authorList>
    </citation>
    <scope>NUCLEOTIDE SEQUENCE [LARGE SCALE GENOMIC DNA]</scope>
    <source>
        <strain>ATCC 49526 / WA1</strain>
    </source>
</reference>
<proteinExistence type="inferred from homology"/>
<evidence type="ECO:0000255" key="1">
    <source>
        <dbReference type="HAMAP-Rule" id="MF_00418"/>
    </source>
</evidence>
<evidence type="ECO:0000305" key="2"/>
<organism>
    <name type="scientific">Brachyspira hyodysenteriae (strain ATCC 49526 / WA1)</name>
    <dbReference type="NCBI Taxonomy" id="565034"/>
    <lineage>
        <taxon>Bacteria</taxon>
        <taxon>Pseudomonadati</taxon>
        <taxon>Spirochaetota</taxon>
        <taxon>Spirochaetia</taxon>
        <taxon>Brachyspirales</taxon>
        <taxon>Brachyspiraceae</taxon>
        <taxon>Brachyspira</taxon>
    </lineage>
</organism>
<gene>
    <name evidence="1" type="primary">dapA</name>
    <name type="ordered locus">BHWA1_01388</name>
</gene>
<accession>C0R176</accession>
<comment type="function">
    <text evidence="1">Catalyzes the condensation of (S)-aspartate-beta-semialdehyde [(S)-ASA] and pyruvate to 4-hydroxy-tetrahydrodipicolinate (HTPA).</text>
</comment>
<comment type="catalytic activity">
    <reaction evidence="1">
        <text>L-aspartate 4-semialdehyde + pyruvate = (2S,4S)-4-hydroxy-2,3,4,5-tetrahydrodipicolinate + H2O + H(+)</text>
        <dbReference type="Rhea" id="RHEA:34171"/>
        <dbReference type="ChEBI" id="CHEBI:15361"/>
        <dbReference type="ChEBI" id="CHEBI:15377"/>
        <dbReference type="ChEBI" id="CHEBI:15378"/>
        <dbReference type="ChEBI" id="CHEBI:67139"/>
        <dbReference type="ChEBI" id="CHEBI:537519"/>
        <dbReference type="EC" id="4.3.3.7"/>
    </reaction>
</comment>
<comment type="pathway">
    <text evidence="1">Amino-acid biosynthesis; L-lysine biosynthesis via DAP pathway; (S)-tetrahydrodipicolinate from L-aspartate: step 3/4.</text>
</comment>
<comment type="subunit">
    <text evidence="1">Homotetramer; dimer of dimers.</text>
</comment>
<comment type="subcellular location">
    <subcellularLocation>
        <location evidence="1">Cytoplasm</location>
    </subcellularLocation>
</comment>
<comment type="similarity">
    <text evidence="1">Belongs to the DapA family.</text>
</comment>
<comment type="caution">
    <text evidence="2">Was originally thought to be a dihydrodipicolinate synthase (DHDPS), catalyzing the condensation of (S)-aspartate-beta-semialdehyde [(S)-ASA] and pyruvate to dihydrodipicolinate (DHDP). However, it was shown in E.coli that the product of the enzymatic reaction is not dihydrodipicolinate but in fact (4S)-4-hydroxy-2,3,4,5-tetrahydro-(2S)-dipicolinic acid (HTPA), and that the consecutive dehydration reaction leading to DHDP is not spontaneous but catalyzed by DapB.</text>
</comment>
<keyword id="KW-0028">Amino-acid biosynthesis</keyword>
<keyword id="KW-0963">Cytoplasm</keyword>
<keyword id="KW-0220">Diaminopimelate biosynthesis</keyword>
<keyword id="KW-0456">Lyase</keyword>
<keyword id="KW-0457">Lysine biosynthesis</keyword>
<keyword id="KW-0704">Schiff base</keyword>
<dbReference type="EC" id="4.3.3.7" evidence="1"/>
<dbReference type="EMBL" id="CP001357">
    <property type="protein sequence ID" value="ACN83864.1"/>
    <property type="molecule type" value="Genomic_DNA"/>
</dbReference>
<dbReference type="RefSeq" id="WP_012670909.1">
    <property type="nucleotide sequence ID" value="NC_012225.1"/>
</dbReference>
<dbReference type="SMR" id="C0R176"/>
<dbReference type="STRING" id="565034.BHWA1_01388"/>
<dbReference type="GeneID" id="63962486"/>
<dbReference type="KEGG" id="bhy:BHWA1_01388"/>
<dbReference type="eggNOG" id="COG0329">
    <property type="taxonomic scope" value="Bacteria"/>
</dbReference>
<dbReference type="HOGENOM" id="CLU_049343_7_1_12"/>
<dbReference type="UniPathway" id="UPA00034">
    <property type="reaction ID" value="UER00017"/>
</dbReference>
<dbReference type="Proteomes" id="UP000001803">
    <property type="component" value="Chromosome"/>
</dbReference>
<dbReference type="GO" id="GO:0005829">
    <property type="term" value="C:cytosol"/>
    <property type="evidence" value="ECO:0007669"/>
    <property type="project" value="TreeGrafter"/>
</dbReference>
<dbReference type="GO" id="GO:0008840">
    <property type="term" value="F:4-hydroxy-tetrahydrodipicolinate synthase activity"/>
    <property type="evidence" value="ECO:0007669"/>
    <property type="project" value="UniProtKB-UniRule"/>
</dbReference>
<dbReference type="GO" id="GO:0019877">
    <property type="term" value="P:diaminopimelate biosynthetic process"/>
    <property type="evidence" value="ECO:0007669"/>
    <property type="project" value="UniProtKB-UniRule"/>
</dbReference>
<dbReference type="GO" id="GO:0009089">
    <property type="term" value="P:lysine biosynthetic process via diaminopimelate"/>
    <property type="evidence" value="ECO:0007669"/>
    <property type="project" value="UniProtKB-UniRule"/>
</dbReference>
<dbReference type="CDD" id="cd00950">
    <property type="entry name" value="DHDPS"/>
    <property type="match status" value="1"/>
</dbReference>
<dbReference type="Gene3D" id="3.20.20.70">
    <property type="entry name" value="Aldolase class I"/>
    <property type="match status" value="1"/>
</dbReference>
<dbReference type="HAMAP" id="MF_00418">
    <property type="entry name" value="DapA"/>
    <property type="match status" value="1"/>
</dbReference>
<dbReference type="InterPro" id="IPR013785">
    <property type="entry name" value="Aldolase_TIM"/>
</dbReference>
<dbReference type="InterPro" id="IPR005263">
    <property type="entry name" value="DapA"/>
</dbReference>
<dbReference type="InterPro" id="IPR002220">
    <property type="entry name" value="DapA-like"/>
</dbReference>
<dbReference type="InterPro" id="IPR020625">
    <property type="entry name" value="Schiff_base-form_aldolases_AS"/>
</dbReference>
<dbReference type="NCBIfam" id="TIGR00674">
    <property type="entry name" value="dapA"/>
    <property type="match status" value="1"/>
</dbReference>
<dbReference type="PANTHER" id="PTHR12128:SF66">
    <property type="entry name" value="4-HYDROXY-2-OXOGLUTARATE ALDOLASE, MITOCHONDRIAL"/>
    <property type="match status" value="1"/>
</dbReference>
<dbReference type="PANTHER" id="PTHR12128">
    <property type="entry name" value="DIHYDRODIPICOLINATE SYNTHASE"/>
    <property type="match status" value="1"/>
</dbReference>
<dbReference type="Pfam" id="PF00701">
    <property type="entry name" value="DHDPS"/>
    <property type="match status" value="1"/>
</dbReference>
<dbReference type="PIRSF" id="PIRSF001365">
    <property type="entry name" value="DHDPS"/>
    <property type="match status" value="1"/>
</dbReference>
<dbReference type="PRINTS" id="PR00146">
    <property type="entry name" value="DHPICSNTHASE"/>
</dbReference>
<dbReference type="SMART" id="SM01130">
    <property type="entry name" value="DHDPS"/>
    <property type="match status" value="1"/>
</dbReference>
<dbReference type="SUPFAM" id="SSF51569">
    <property type="entry name" value="Aldolase"/>
    <property type="match status" value="1"/>
</dbReference>
<dbReference type="PROSITE" id="PS00666">
    <property type="entry name" value="DHDPS_2"/>
    <property type="match status" value="1"/>
</dbReference>
<feature type="chain" id="PRO_1000134859" description="4-hydroxy-tetrahydrodipicolinate synthase">
    <location>
        <begin position="1"/>
        <end position="293"/>
    </location>
</feature>
<feature type="active site" description="Proton donor/acceptor" evidence="1">
    <location>
        <position position="135"/>
    </location>
</feature>
<feature type="active site" description="Schiff-base intermediate with substrate" evidence="1">
    <location>
        <position position="163"/>
    </location>
</feature>
<feature type="binding site" evidence="1">
    <location>
        <position position="47"/>
    </location>
    <ligand>
        <name>pyruvate</name>
        <dbReference type="ChEBI" id="CHEBI:15361"/>
    </ligand>
</feature>
<feature type="binding site" evidence="1">
    <location>
        <position position="204"/>
    </location>
    <ligand>
        <name>pyruvate</name>
        <dbReference type="ChEBI" id="CHEBI:15361"/>
    </ligand>
</feature>
<feature type="site" description="Part of a proton relay during catalysis" evidence="1">
    <location>
        <position position="46"/>
    </location>
</feature>
<feature type="site" description="Part of a proton relay during catalysis" evidence="1">
    <location>
        <position position="109"/>
    </location>
</feature>
<name>DAPA_BRAHW</name>